<protein>
    <recommendedName>
        <fullName evidence="1">DNA ligase</fullName>
        <ecNumber evidence="1">6.5.1.2</ecNumber>
    </recommendedName>
    <alternativeName>
        <fullName evidence="1">Polydeoxyribonucleotide synthase [NAD(+)]</fullName>
    </alternativeName>
</protein>
<organism>
    <name type="scientific">Francisella tularensis subsp. tularensis (strain WY96-3418)</name>
    <dbReference type="NCBI Taxonomy" id="418136"/>
    <lineage>
        <taxon>Bacteria</taxon>
        <taxon>Pseudomonadati</taxon>
        <taxon>Pseudomonadota</taxon>
        <taxon>Gammaproteobacteria</taxon>
        <taxon>Thiotrichales</taxon>
        <taxon>Francisellaceae</taxon>
        <taxon>Francisella</taxon>
    </lineage>
</organism>
<name>DNLJ_FRATW</name>
<gene>
    <name evidence="1" type="primary">ligA</name>
    <name type="ordered locus">FTW_0501</name>
</gene>
<sequence length="678" mass="76455">MTPNEFFSIKYHILAKAELKAYIDKLADYLSQQSYLYHTLDKPIISDSDYDKLFRLLQDLVNDNPQFKPINSVLDRVGGEVLAGFETIKHKKKMTSLANVFSLEELRDFYDKIEYDIELECEPKMDGLAISIFYKNGKFDYAVTRGDGIQGEKVSENVKTIRNVPLKLNTSNPPEELEVRGEIILDKQSFLSLNEYMQTHENKTFANPRNAAAGSIRMLDSKVVAKRPLKLYSYGIGYFSKDFVYPETQFELMQLLQSFGFTISDNMFLAKNFSEVEEYHHKMSHQRADLAYDIDGLVFKVNNIKLQDTIGYTARGPKWAIAYKFPAEEVESEVLNVEFQVGRTGAITPVARLKPVAVGGVIVSNATLHNINEIKRKDIRVGDRVIVRRAGDVIPEVVKSLPQYRKSDAQMVEMPTNCPVCDSKIENVNDQAIYRCTGGWHCQAQTTERLKHFVSRKAMDIDKLGAKLIEQLVAANLIKYPADIYKLNFEQLTGLERMAAKSSQNVLDSITKSKEPSLARFIFAIGIKDIGEVSSDALANHFGSLESFRDAKFEELIEINDIGEIMANNIVSFWHDSLNIKIVEEFLAIGIKIQNPVKVEHAYNESFTGKTVVITGSFENYGRTELTQLLKSIGAKVTSSVSKKTDMVICGDNAGSKLTKAQELGVEVILEDNLKDLL</sequence>
<keyword id="KW-0227">DNA damage</keyword>
<keyword id="KW-0234">DNA repair</keyword>
<keyword id="KW-0235">DNA replication</keyword>
<keyword id="KW-0436">Ligase</keyword>
<keyword id="KW-0460">Magnesium</keyword>
<keyword id="KW-0464">Manganese</keyword>
<keyword id="KW-0479">Metal-binding</keyword>
<keyword id="KW-0520">NAD</keyword>
<keyword id="KW-0862">Zinc</keyword>
<proteinExistence type="inferred from homology"/>
<accession>A4IWW8</accession>
<evidence type="ECO:0000255" key="1">
    <source>
        <dbReference type="HAMAP-Rule" id="MF_01588"/>
    </source>
</evidence>
<comment type="function">
    <text evidence="1">DNA ligase that catalyzes the formation of phosphodiester linkages between 5'-phosphoryl and 3'-hydroxyl groups in double-stranded DNA using NAD as a coenzyme and as the energy source for the reaction. It is essential for DNA replication and repair of damaged DNA.</text>
</comment>
<comment type="catalytic activity">
    <reaction evidence="1">
        <text>NAD(+) + (deoxyribonucleotide)n-3'-hydroxyl + 5'-phospho-(deoxyribonucleotide)m = (deoxyribonucleotide)n+m + AMP + beta-nicotinamide D-nucleotide.</text>
        <dbReference type="EC" id="6.5.1.2"/>
    </reaction>
</comment>
<comment type="cofactor">
    <cofactor evidence="1">
        <name>Mg(2+)</name>
        <dbReference type="ChEBI" id="CHEBI:18420"/>
    </cofactor>
    <cofactor evidence="1">
        <name>Mn(2+)</name>
        <dbReference type="ChEBI" id="CHEBI:29035"/>
    </cofactor>
</comment>
<comment type="similarity">
    <text evidence="1">Belongs to the NAD-dependent DNA ligase family. LigA subfamily.</text>
</comment>
<reference key="1">
    <citation type="journal article" date="2007" name="PLoS ONE">
        <title>Complete genomic characterization of a pathogenic A.II strain of Francisella tularensis subspecies tularensis.</title>
        <authorList>
            <person name="Beckstrom-Sternberg S.M."/>
            <person name="Auerbach R.K."/>
            <person name="Godbole S."/>
            <person name="Pearson J.V."/>
            <person name="Beckstrom-Sternberg J.S."/>
            <person name="Deng Z."/>
            <person name="Munk C."/>
            <person name="Kubota K."/>
            <person name="Zhou Y."/>
            <person name="Bruce D."/>
            <person name="Noronha J."/>
            <person name="Scheuermann R.H."/>
            <person name="Wang A."/>
            <person name="Wei X."/>
            <person name="Wang J."/>
            <person name="Hao J."/>
            <person name="Wagner D.M."/>
            <person name="Brettin T.S."/>
            <person name="Brown N."/>
            <person name="Gilna P."/>
            <person name="Keim P.S."/>
        </authorList>
    </citation>
    <scope>NUCLEOTIDE SEQUENCE [LARGE SCALE GENOMIC DNA]</scope>
    <source>
        <strain>WY96-3418</strain>
    </source>
</reference>
<dbReference type="EC" id="6.5.1.2" evidence="1"/>
<dbReference type="EMBL" id="CP000608">
    <property type="protein sequence ID" value="ABO46420.1"/>
    <property type="molecule type" value="Genomic_DNA"/>
</dbReference>
<dbReference type="RefSeq" id="WP_003024021.1">
    <property type="nucleotide sequence ID" value="NC_009257.1"/>
</dbReference>
<dbReference type="SMR" id="A4IWW8"/>
<dbReference type="KEGG" id="ftw:FTW_0501"/>
<dbReference type="HOGENOM" id="CLU_007764_2_1_6"/>
<dbReference type="GO" id="GO:0005829">
    <property type="term" value="C:cytosol"/>
    <property type="evidence" value="ECO:0007669"/>
    <property type="project" value="TreeGrafter"/>
</dbReference>
<dbReference type="GO" id="GO:0003677">
    <property type="term" value="F:DNA binding"/>
    <property type="evidence" value="ECO:0007669"/>
    <property type="project" value="InterPro"/>
</dbReference>
<dbReference type="GO" id="GO:0003911">
    <property type="term" value="F:DNA ligase (NAD+) activity"/>
    <property type="evidence" value="ECO:0007669"/>
    <property type="project" value="UniProtKB-UniRule"/>
</dbReference>
<dbReference type="GO" id="GO:0046872">
    <property type="term" value="F:metal ion binding"/>
    <property type="evidence" value="ECO:0007669"/>
    <property type="project" value="UniProtKB-KW"/>
</dbReference>
<dbReference type="GO" id="GO:0006281">
    <property type="term" value="P:DNA repair"/>
    <property type="evidence" value="ECO:0007669"/>
    <property type="project" value="UniProtKB-KW"/>
</dbReference>
<dbReference type="GO" id="GO:0006260">
    <property type="term" value="P:DNA replication"/>
    <property type="evidence" value="ECO:0007669"/>
    <property type="project" value="UniProtKB-KW"/>
</dbReference>
<dbReference type="CDD" id="cd17748">
    <property type="entry name" value="BRCT_DNA_ligase_like"/>
    <property type="match status" value="1"/>
</dbReference>
<dbReference type="CDD" id="cd00114">
    <property type="entry name" value="LIGANc"/>
    <property type="match status" value="1"/>
</dbReference>
<dbReference type="FunFam" id="1.10.150.20:FF:000007">
    <property type="entry name" value="DNA ligase"/>
    <property type="match status" value="1"/>
</dbReference>
<dbReference type="FunFam" id="2.40.50.140:FF:000012">
    <property type="entry name" value="DNA ligase"/>
    <property type="match status" value="1"/>
</dbReference>
<dbReference type="FunFam" id="3.30.470.30:FF:000001">
    <property type="entry name" value="DNA ligase"/>
    <property type="match status" value="1"/>
</dbReference>
<dbReference type="Gene3D" id="6.20.10.30">
    <property type="match status" value="1"/>
</dbReference>
<dbReference type="Gene3D" id="1.10.150.20">
    <property type="entry name" value="5' to 3' exonuclease, C-terminal subdomain"/>
    <property type="match status" value="2"/>
</dbReference>
<dbReference type="Gene3D" id="3.40.50.10190">
    <property type="entry name" value="BRCT domain"/>
    <property type="match status" value="1"/>
</dbReference>
<dbReference type="Gene3D" id="3.30.470.30">
    <property type="entry name" value="DNA ligase/mRNA capping enzyme"/>
    <property type="match status" value="1"/>
</dbReference>
<dbReference type="Gene3D" id="1.10.287.610">
    <property type="entry name" value="Helix hairpin bin"/>
    <property type="match status" value="1"/>
</dbReference>
<dbReference type="Gene3D" id="2.40.50.140">
    <property type="entry name" value="Nucleic acid-binding proteins"/>
    <property type="match status" value="1"/>
</dbReference>
<dbReference type="HAMAP" id="MF_01588">
    <property type="entry name" value="DNA_ligase_A"/>
    <property type="match status" value="1"/>
</dbReference>
<dbReference type="InterPro" id="IPR001357">
    <property type="entry name" value="BRCT_dom"/>
</dbReference>
<dbReference type="InterPro" id="IPR036420">
    <property type="entry name" value="BRCT_dom_sf"/>
</dbReference>
<dbReference type="InterPro" id="IPR041663">
    <property type="entry name" value="DisA/LigA_HHH"/>
</dbReference>
<dbReference type="InterPro" id="IPR001679">
    <property type="entry name" value="DNA_ligase"/>
</dbReference>
<dbReference type="InterPro" id="IPR033136">
    <property type="entry name" value="DNA_ligase_CS"/>
</dbReference>
<dbReference type="InterPro" id="IPR013839">
    <property type="entry name" value="DNAligase_adenylation"/>
</dbReference>
<dbReference type="InterPro" id="IPR013840">
    <property type="entry name" value="DNAligase_N"/>
</dbReference>
<dbReference type="InterPro" id="IPR003583">
    <property type="entry name" value="Hlx-hairpin-Hlx_DNA-bd_motif"/>
</dbReference>
<dbReference type="InterPro" id="IPR012340">
    <property type="entry name" value="NA-bd_OB-fold"/>
</dbReference>
<dbReference type="InterPro" id="IPR004150">
    <property type="entry name" value="NAD_DNA_ligase_OB"/>
</dbReference>
<dbReference type="InterPro" id="IPR010994">
    <property type="entry name" value="RuvA_2-like"/>
</dbReference>
<dbReference type="InterPro" id="IPR004149">
    <property type="entry name" value="Znf_DNAligase_C4"/>
</dbReference>
<dbReference type="NCBIfam" id="TIGR00575">
    <property type="entry name" value="dnlj"/>
    <property type="match status" value="1"/>
</dbReference>
<dbReference type="NCBIfam" id="NF005932">
    <property type="entry name" value="PRK07956.1"/>
    <property type="match status" value="1"/>
</dbReference>
<dbReference type="PANTHER" id="PTHR23389">
    <property type="entry name" value="CHROMOSOME TRANSMISSION FIDELITY FACTOR 18"/>
    <property type="match status" value="1"/>
</dbReference>
<dbReference type="PANTHER" id="PTHR23389:SF9">
    <property type="entry name" value="DNA LIGASE"/>
    <property type="match status" value="1"/>
</dbReference>
<dbReference type="Pfam" id="PF00533">
    <property type="entry name" value="BRCT"/>
    <property type="match status" value="1"/>
</dbReference>
<dbReference type="Pfam" id="PF01653">
    <property type="entry name" value="DNA_ligase_aden"/>
    <property type="match status" value="1"/>
</dbReference>
<dbReference type="Pfam" id="PF03120">
    <property type="entry name" value="DNA_ligase_OB"/>
    <property type="match status" value="1"/>
</dbReference>
<dbReference type="Pfam" id="PF03119">
    <property type="entry name" value="DNA_ligase_ZBD"/>
    <property type="match status" value="1"/>
</dbReference>
<dbReference type="Pfam" id="PF12826">
    <property type="entry name" value="HHH_2"/>
    <property type="match status" value="1"/>
</dbReference>
<dbReference type="Pfam" id="PF22745">
    <property type="entry name" value="Nlig-Ia"/>
    <property type="match status" value="1"/>
</dbReference>
<dbReference type="PIRSF" id="PIRSF001604">
    <property type="entry name" value="LigA"/>
    <property type="match status" value="1"/>
</dbReference>
<dbReference type="SMART" id="SM00292">
    <property type="entry name" value="BRCT"/>
    <property type="match status" value="1"/>
</dbReference>
<dbReference type="SMART" id="SM00278">
    <property type="entry name" value="HhH1"/>
    <property type="match status" value="4"/>
</dbReference>
<dbReference type="SMART" id="SM00532">
    <property type="entry name" value="LIGANc"/>
    <property type="match status" value="1"/>
</dbReference>
<dbReference type="SUPFAM" id="SSF52113">
    <property type="entry name" value="BRCT domain"/>
    <property type="match status" value="1"/>
</dbReference>
<dbReference type="SUPFAM" id="SSF56091">
    <property type="entry name" value="DNA ligase/mRNA capping enzyme, catalytic domain"/>
    <property type="match status" value="1"/>
</dbReference>
<dbReference type="SUPFAM" id="SSF50249">
    <property type="entry name" value="Nucleic acid-binding proteins"/>
    <property type="match status" value="1"/>
</dbReference>
<dbReference type="SUPFAM" id="SSF47781">
    <property type="entry name" value="RuvA domain 2-like"/>
    <property type="match status" value="1"/>
</dbReference>
<dbReference type="PROSITE" id="PS50172">
    <property type="entry name" value="BRCT"/>
    <property type="match status" value="1"/>
</dbReference>
<dbReference type="PROSITE" id="PS01056">
    <property type="entry name" value="DNA_LIGASE_N2"/>
    <property type="match status" value="1"/>
</dbReference>
<feature type="chain" id="PRO_0000313243" description="DNA ligase">
    <location>
        <begin position="1"/>
        <end position="678"/>
    </location>
</feature>
<feature type="domain" description="BRCT" evidence="1">
    <location>
        <begin position="602"/>
        <end position="678"/>
    </location>
</feature>
<feature type="active site" description="N6-AMP-lysine intermediate" evidence="1">
    <location>
        <position position="124"/>
    </location>
</feature>
<feature type="binding site" evidence="1">
    <location>
        <begin position="47"/>
        <end position="51"/>
    </location>
    <ligand>
        <name>NAD(+)</name>
        <dbReference type="ChEBI" id="CHEBI:57540"/>
    </ligand>
</feature>
<feature type="binding site" evidence="1">
    <location>
        <begin position="96"/>
        <end position="97"/>
    </location>
    <ligand>
        <name>NAD(+)</name>
        <dbReference type="ChEBI" id="CHEBI:57540"/>
    </ligand>
</feature>
<feature type="binding site" evidence="1">
    <location>
        <position position="122"/>
    </location>
    <ligand>
        <name>NAD(+)</name>
        <dbReference type="ChEBI" id="CHEBI:57540"/>
    </ligand>
</feature>
<feature type="binding site" evidence="1">
    <location>
        <position position="145"/>
    </location>
    <ligand>
        <name>NAD(+)</name>
        <dbReference type="ChEBI" id="CHEBI:57540"/>
    </ligand>
</feature>
<feature type="binding site" evidence="1">
    <location>
        <position position="182"/>
    </location>
    <ligand>
        <name>NAD(+)</name>
        <dbReference type="ChEBI" id="CHEBI:57540"/>
    </ligand>
</feature>
<feature type="binding site" evidence="1">
    <location>
        <position position="300"/>
    </location>
    <ligand>
        <name>NAD(+)</name>
        <dbReference type="ChEBI" id="CHEBI:57540"/>
    </ligand>
</feature>
<feature type="binding site" evidence="1">
    <location>
        <position position="324"/>
    </location>
    <ligand>
        <name>NAD(+)</name>
        <dbReference type="ChEBI" id="CHEBI:57540"/>
    </ligand>
</feature>
<feature type="binding site" evidence="1">
    <location>
        <position position="418"/>
    </location>
    <ligand>
        <name>Zn(2+)</name>
        <dbReference type="ChEBI" id="CHEBI:29105"/>
    </ligand>
</feature>
<feature type="binding site" evidence="1">
    <location>
        <position position="421"/>
    </location>
    <ligand>
        <name>Zn(2+)</name>
        <dbReference type="ChEBI" id="CHEBI:29105"/>
    </ligand>
</feature>
<feature type="binding site" evidence="1">
    <location>
        <position position="436"/>
    </location>
    <ligand>
        <name>Zn(2+)</name>
        <dbReference type="ChEBI" id="CHEBI:29105"/>
    </ligand>
</feature>
<feature type="binding site" evidence="1">
    <location>
        <position position="442"/>
    </location>
    <ligand>
        <name>Zn(2+)</name>
        <dbReference type="ChEBI" id="CHEBI:29105"/>
    </ligand>
</feature>